<sequence length="129" mass="13892">MAKQPTRARKRVRKQVADGVAHIHASFNNTIVTITDRQGNALAWATAGGSGFRGSRKSTPFAAQVAAERCGEMAKEYGVKNLEVMVKGPGPGRESTIRALNAAGYRITNIVDATPIPHNGCRPPKKRRV</sequence>
<gene>
    <name evidence="1" type="primary">rpsK</name>
    <name type="ordered locus">VFMJ11_0248</name>
</gene>
<keyword id="KW-0687">Ribonucleoprotein</keyword>
<keyword id="KW-0689">Ribosomal protein</keyword>
<keyword id="KW-0694">RNA-binding</keyword>
<keyword id="KW-0699">rRNA-binding</keyword>
<organism>
    <name type="scientific">Aliivibrio fischeri (strain MJ11)</name>
    <name type="common">Vibrio fischeri</name>
    <dbReference type="NCBI Taxonomy" id="388396"/>
    <lineage>
        <taxon>Bacteria</taxon>
        <taxon>Pseudomonadati</taxon>
        <taxon>Pseudomonadota</taxon>
        <taxon>Gammaproteobacteria</taxon>
        <taxon>Vibrionales</taxon>
        <taxon>Vibrionaceae</taxon>
        <taxon>Aliivibrio</taxon>
    </lineage>
</organism>
<reference key="1">
    <citation type="submission" date="2008-08" db="EMBL/GenBank/DDBJ databases">
        <title>Complete sequence of Vibrio fischeri strain MJ11.</title>
        <authorList>
            <person name="Mandel M.J."/>
            <person name="Stabb E.V."/>
            <person name="Ruby E.G."/>
            <person name="Ferriera S."/>
            <person name="Johnson J."/>
            <person name="Kravitz S."/>
            <person name="Beeson K."/>
            <person name="Sutton G."/>
            <person name="Rogers Y.-H."/>
            <person name="Friedman R."/>
            <person name="Frazier M."/>
            <person name="Venter J.C."/>
        </authorList>
    </citation>
    <scope>NUCLEOTIDE SEQUENCE [LARGE SCALE GENOMIC DNA]</scope>
    <source>
        <strain>MJ11</strain>
    </source>
</reference>
<evidence type="ECO:0000255" key="1">
    <source>
        <dbReference type="HAMAP-Rule" id="MF_01310"/>
    </source>
</evidence>
<evidence type="ECO:0000305" key="2"/>
<name>RS11_ALIFM</name>
<feature type="chain" id="PRO_1000141156" description="Small ribosomal subunit protein uS11">
    <location>
        <begin position="1"/>
        <end position="129"/>
    </location>
</feature>
<dbReference type="EMBL" id="CP001139">
    <property type="protein sequence ID" value="ACH65062.1"/>
    <property type="molecule type" value="Genomic_DNA"/>
</dbReference>
<dbReference type="RefSeq" id="WP_005303517.1">
    <property type="nucleotide sequence ID" value="NC_011184.1"/>
</dbReference>
<dbReference type="SMR" id="B5FGD9"/>
<dbReference type="GeneID" id="93398995"/>
<dbReference type="KEGG" id="vfm:VFMJ11_0248"/>
<dbReference type="HOGENOM" id="CLU_072439_5_0_6"/>
<dbReference type="Proteomes" id="UP000001857">
    <property type="component" value="Chromosome I"/>
</dbReference>
<dbReference type="GO" id="GO:1990904">
    <property type="term" value="C:ribonucleoprotein complex"/>
    <property type="evidence" value="ECO:0007669"/>
    <property type="project" value="UniProtKB-KW"/>
</dbReference>
<dbReference type="GO" id="GO:0005840">
    <property type="term" value="C:ribosome"/>
    <property type="evidence" value="ECO:0007669"/>
    <property type="project" value="UniProtKB-KW"/>
</dbReference>
<dbReference type="GO" id="GO:0019843">
    <property type="term" value="F:rRNA binding"/>
    <property type="evidence" value="ECO:0007669"/>
    <property type="project" value="UniProtKB-UniRule"/>
</dbReference>
<dbReference type="GO" id="GO:0003735">
    <property type="term" value="F:structural constituent of ribosome"/>
    <property type="evidence" value="ECO:0007669"/>
    <property type="project" value="InterPro"/>
</dbReference>
<dbReference type="GO" id="GO:0006412">
    <property type="term" value="P:translation"/>
    <property type="evidence" value="ECO:0007669"/>
    <property type="project" value="UniProtKB-UniRule"/>
</dbReference>
<dbReference type="FunFam" id="3.30.420.80:FF:000001">
    <property type="entry name" value="30S ribosomal protein S11"/>
    <property type="match status" value="1"/>
</dbReference>
<dbReference type="Gene3D" id="3.30.420.80">
    <property type="entry name" value="Ribosomal protein S11"/>
    <property type="match status" value="1"/>
</dbReference>
<dbReference type="HAMAP" id="MF_01310">
    <property type="entry name" value="Ribosomal_uS11"/>
    <property type="match status" value="1"/>
</dbReference>
<dbReference type="InterPro" id="IPR001971">
    <property type="entry name" value="Ribosomal_uS11"/>
</dbReference>
<dbReference type="InterPro" id="IPR019981">
    <property type="entry name" value="Ribosomal_uS11_bac-type"/>
</dbReference>
<dbReference type="InterPro" id="IPR018102">
    <property type="entry name" value="Ribosomal_uS11_CS"/>
</dbReference>
<dbReference type="InterPro" id="IPR036967">
    <property type="entry name" value="Ribosomal_uS11_sf"/>
</dbReference>
<dbReference type="NCBIfam" id="NF003698">
    <property type="entry name" value="PRK05309.1"/>
    <property type="match status" value="1"/>
</dbReference>
<dbReference type="NCBIfam" id="TIGR03632">
    <property type="entry name" value="uS11_bact"/>
    <property type="match status" value="1"/>
</dbReference>
<dbReference type="PANTHER" id="PTHR11759">
    <property type="entry name" value="40S RIBOSOMAL PROTEIN S14/30S RIBOSOMAL PROTEIN S11"/>
    <property type="match status" value="1"/>
</dbReference>
<dbReference type="Pfam" id="PF00411">
    <property type="entry name" value="Ribosomal_S11"/>
    <property type="match status" value="1"/>
</dbReference>
<dbReference type="PIRSF" id="PIRSF002131">
    <property type="entry name" value="Ribosomal_S11"/>
    <property type="match status" value="1"/>
</dbReference>
<dbReference type="SUPFAM" id="SSF53137">
    <property type="entry name" value="Translational machinery components"/>
    <property type="match status" value="1"/>
</dbReference>
<dbReference type="PROSITE" id="PS00054">
    <property type="entry name" value="RIBOSOMAL_S11"/>
    <property type="match status" value="1"/>
</dbReference>
<protein>
    <recommendedName>
        <fullName evidence="1">Small ribosomal subunit protein uS11</fullName>
    </recommendedName>
    <alternativeName>
        <fullName evidence="2">30S ribosomal protein S11</fullName>
    </alternativeName>
</protein>
<accession>B5FGD9</accession>
<comment type="function">
    <text evidence="1">Located on the platform of the 30S subunit, it bridges several disparate RNA helices of the 16S rRNA. Forms part of the Shine-Dalgarno cleft in the 70S ribosome.</text>
</comment>
<comment type="subunit">
    <text evidence="1">Part of the 30S ribosomal subunit. Interacts with proteins S7 and S18. Binds to IF-3.</text>
</comment>
<comment type="similarity">
    <text evidence="1">Belongs to the universal ribosomal protein uS11 family.</text>
</comment>
<proteinExistence type="inferred from homology"/>